<dbReference type="EC" id="3.6.1.-" evidence="1"/>
<dbReference type="EMBL" id="CP000538">
    <property type="protein sequence ID" value="EAQ73270.1"/>
    <property type="molecule type" value="Genomic_DNA"/>
</dbReference>
<dbReference type="RefSeq" id="WP_002854797.1">
    <property type="nucleotide sequence ID" value="NC_008787.1"/>
</dbReference>
<dbReference type="SMR" id="A1VYU1"/>
<dbReference type="KEGG" id="cjj:CJJ81176_0609"/>
<dbReference type="eggNOG" id="COG0494">
    <property type="taxonomic scope" value="Bacteria"/>
</dbReference>
<dbReference type="HOGENOM" id="CLU_087195_3_0_7"/>
<dbReference type="Proteomes" id="UP000000646">
    <property type="component" value="Chromosome"/>
</dbReference>
<dbReference type="GO" id="GO:0016462">
    <property type="term" value="F:pyrophosphatase activity"/>
    <property type="evidence" value="ECO:0007669"/>
    <property type="project" value="UniProtKB-ARBA"/>
</dbReference>
<dbReference type="CDD" id="cd03671">
    <property type="entry name" value="NUDIX_Ap4A_hydrolase_plant_like"/>
    <property type="match status" value="1"/>
</dbReference>
<dbReference type="Gene3D" id="3.90.79.10">
    <property type="entry name" value="Nucleoside Triphosphate Pyrophosphohydrolase"/>
    <property type="match status" value="1"/>
</dbReference>
<dbReference type="HAMAP" id="MF_00298">
    <property type="entry name" value="Nudix_RppH"/>
    <property type="match status" value="1"/>
</dbReference>
<dbReference type="InterPro" id="IPR020476">
    <property type="entry name" value="Nudix_hydrolase"/>
</dbReference>
<dbReference type="InterPro" id="IPR015797">
    <property type="entry name" value="NUDIX_hydrolase-like_dom_sf"/>
</dbReference>
<dbReference type="InterPro" id="IPR020084">
    <property type="entry name" value="NUDIX_hydrolase_CS"/>
</dbReference>
<dbReference type="InterPro" id="IPR000086">
    <property type="entry name" value="NUDIX_hydrolase_dom"/>
</dbReference>
<dbReference type="InterPro" id="IPR022927">
    <property type="entry name" value="RppH"/>
</dbReference>
<dbReference type="NCBIfam" id="NF001936">
    <property type="entry name" value="PRK00714.1-3"/>
    <property type="match status" value="1"/>
</dbReference>
<dbReference type="NCBIfam" id="NF001938">
    <property type="entry name" value="PRK00714.1-5"/>
    <property type="match status" value="1"/>
</dbReference>
<dbReference type="PANTHER" id="PTHR43736">
    <property type="entry name" value="ADP-RIBOSE PYROPHOSPHATASE"/>
    <property type="match status" value="1"/>
</dbReference>
<dbReference type="PANTHER" id="PTHR43736:SF1">
    <property type="entry name" value="DIHYDRONEOPTERIN TRIPHOSPHATE DIPHOSPHATASE"/>
    <property type="match status" value="1"/>
</dbReference>
<dbReference type="Pfam" id="PF00293">
    <property type="entry name" value="NUDIX"/>
    <property type="match status" value="1"/>
</dbReference>
<dbReference type="PRINTS" id="PR00502">
    <property type="entry name" value="NUDIXFAMILY"/>
</dbReference>
<dbReference type="SUPFAM" id="SSF55811">
    <property type="entry name" value="Nudix"/>
    <property type="match status" value="1"/>
</dbReference>
<dbReference type="PROSITE" id="PS51462">
    <property type="entry name" value="NUDIX"/>
    <property type="match status" value="1"/>
</dbReference>
<dbReference type="PROSITE" id="PS00893">
    <property type="entry name" value="NUDIX_BOX"/>
    <property type="match status" value="1"/>
</dbReference>
<keyword id="KW-0378">Hydrolase</keyword>
<accession>A1VYU1</accession>
<organism>
    <name type="scientific">Campylobacter jejuni subsp. jejuni serotype O:23/36 (strain 81-176)</name>
    <dbReference type="NCBI Taxonomy" id="354242"/>
    <lineage>
        <taxon>Bacteria</taxon>
        <taxon>Pseudomonadati</taxon>
        <taxon>Campylobacterota</taxon>
        <taxon>Epsilonproteobacteria</taxon>
        <taxon>Campylobacterales</taxon>
        <taxon>Campylobacteraceae</taxon>
        <taxon>Campylobacter</taxon>
    </lineage>
</organism>
<sequence>MENEKNYRPNVAAIVLSSSYPFECKIFIAKRSDMDNIWQFPQGGIDKGESVKNALFRELKEEIGTDEVEIIAEYPEWLSYDFPSKIVKKMYPYDGQIQKYFLVRLKHGATININTKHPEFDDYQFVSVKQIFEMINHFKKNIYVKVIKYFEEKGYI</sequence>
<gene>
    <name evidence="1" type="primary">rppH</name>
    <name evidence="1" type="synonym">nudH</name>
    <name type="ordered locus">CJJ81176_0609</name>
</gene>
<reference key="1">
    <citation type="submission" date="2006-12" db="EMBL/GenBank/DDBJ databases">
        <authorList>
            <person name="Fouts D.E."/>
            <person name="Nelson K.E."/>
            <person name="Sebastian Y."/>
        </authorList>
    </citation>
    <scope>NUCLEOTIDE SEQUENCE [LARGE SCALE GENOMIC DNA]</scope>
    <source>
        <strain>81-176</strain>
    </source>
</reference>
<comment type="function">
    <text evidence="1">Accelerates the degradation of transcripts by removing pyrophosphate from the 5'-end of triphosphorylated RNA, leading to a more labile monophosphorylated state that can stimulate subsequent ribonuclease cleavage.</text>
</comment>
<comment type="cofactor">
    <cofactor evidence="1">
        <name>a divalent metal cation</name>
        <dbReference type="ChEBI" id="CHEBI:60240"/>
    </cofactor>
</comment>
<comment type="similarity">
    <text evidence="1">Belongs to the Nudix hydrolase family. RppH subfamily.</text>
</comment>
<evidence type="ECO:0000255" key="1">
    <source>
        <dbReference type="HAMAP-Rule" id="MF_00298"/>
    </source>
</evidence>
<protein>
    <recommendedName>
        <fullName evidence="1">RNA pyrophosphohydrolase</fullName>
        <ecNumber evidence="1">3.6.1.-</ecNumber>
    </recommendedName>
    <alternativeName>
        <fullName evidence="1">(Di)nucleoside polyphosphate hydrolase</fullName>
    </alternativeName>
</protein>
<name>RPPH_CAMJJ</name>
<proteinExistence type="inferred from homology"/>
<feature type="chain" id="PRO_1000078958" description="RNA pyrophosphohydrolase">
    <location>
        <begin position="1"/>
        <end position="156"/>
    </location>
</feature>
<feature type="domain" description="Nudix hydrolase" evidence="1">
    <location>
        <begin position="6"/>
        <end position="148"/>
    </location>
</feature>
<feature type="short sequence motif" description="Nudix box">
    <location>
        <begin position="43"/>
        <end position="64"/>
    </location>
</feature>